<comment type="function">
    <text evidence="1">Interferon-stimulated protein that plays an important role in innate immune response against a wide variety of viruses. Inhibits flavivirus replication by preventing the formation of virus-induced endoplasmic reticulum membrane invaginations, which are double-membrane vesicles that flaviviruses use for their replication. Plays a role in apoptosis, negatively regulating the intrinsinc apoptotic signaling pathway and TNFSF10-induced apoptosis. However, it has also been shown to have a pro-apoptotic activity. Modulates innate immune response mediated by RIGI by preventing its activation.</text>
</comment>
<comment type="subunit">
    <text evidence="1">Interacts with CIB1; the interaction is direct. Interacts with the chaperone BIP/HSPA5. Interacts with RIGI.</text>
</comment>
<comment type="subcellular location">
    <subcellularLocation>
        <location evidence="1">Mitochondrion inner membrane</location>
        <topology evidence="2">Multi-pass membrane protein</topology>
    </subcellularLocation>
</comment>
<comment type="PTM">
    <text evidence="1">Glycosylated.</text>
</comment>
<comment type="similarity">
    <text evidence="4">Belongs to the IFI6/IFI27 family.</text>
</comment>
<reference key="1">
    <citation type="submission" date="2006-01" db="EMBL/GenBank/DDBJ databases">
        <authorList>
            <consortium name="NIH - Mammalian Gene Collection (MGC) project"/>
        </authorList>
    </citation>
    <scope>NUCLEOTIDE SEQUENCE [LARGE SCALE MRNA]</scope>
    <source>
        <strain>Hereford</strain>
        <tissue>Testis</tissue>
    </source>
</reference>
<reference key="2">
    <citation type="journal article" date="2004" name="BMC Genomics">
        <title>Identification of a novel gene family that includes the interferon-inducible human genes 6-16 and ISG12.</title>
        <authorList>
            <person name="Parker N."/>
            <person name="Porter A.C.G."/>
        </authorList>
    </citation>
    <scope>IDENTIFICATION</scope>
</reference>
<keyword id="KW-0051">Antiviral defense</keyword>
<keyword id="KW-0053">Apoptosis</keyword>
<keyword id="KW-0391">Immunity</keyword>
<keyword id="KW-0399">Innate immunity</keyword>
<keyword id="KW-0472">Membrane</keyword>
<keyword id="KW-0496">Mitochondrion</keyword>
<keyword id="KW-0999">Mitochondrion inner membrane</keyword>
<keyword id="KW-1185">Reference proteome</keyword>
<keyword id="KW-0812">Transmembrane</keyword>
<keyword id="KW-1133">Transmembrane helix</keyword>
<feature type="chain" id="PRO_0000281926" description="Interferon alpha-inducible protein 6">
    <location>
        <begin position="1"/>
        <end position="134"/>
    </location>
</feature>
<feature type="transmembrane region" description="Helical" evidence="2">
    <location>
        <begin position="7"/>
        <end position="23"/>
    </location>
</feature>
<feature type="transmembrane region" description="Helical" evidence="2">
    <location>
        <begin position="41"/>
        <end position="61"/>
    </location>
</feature>
<feature type="transmembrane region" description="Helical" evidence="2">
    <location>
        <begin position="75"/>
        <end position="95"/>
    </location>
</feature>
<feature type="transmembrane region" description="Helical" evidence="2">
    <location>
        <begin position="99"/>
        <end position="119"/>
    </location>
</feature>
<evidence type="ECO:0000250" key="1">
    <source>
        <dbReference type="UniProtKB" id="P09912"/>
    </source>
</evidence>
<evidence type="ECO:0000255" key="2"/>
<evidence type="ECO:0000303" key="3">
    <source>
    </source>
</evidence>
<evidence type="ECO:0000305" key="4"/>
<organism>
    <name type="scientific">Bos taurus</name>
    <name type="common">Bovine</name>
    <dbReference type="NCBI Taxonomy" id="9913"/>
    <lineage>
        <taxon>Eukaryota</taxon>
        <taxon>Metazoa</taxon>
        <taxon>Chordata</taxon>
        <taxon>Craniata</taxon>
        <taxon>Vertebrata</taxon>
        <taxon>Euteleostomi</taxon>
        <taxon>Mammalia</taxon>
        <taxon>Eutheria</taxon>
        <taxon>Laurasiatheria</taxon>
        <taxon>Artiodactyla</taxon>
        <taxon>Ruminantia</taxon>
        <taxon>Pecora</taxon>
        <taxon>Bovidae</taxon>
        <taxon>Bovinae</taxon>
        <taxon>Bos</taxon>
    </lineage>
</organism>
<name>IFI6_BOVIN</name>
<accession>Q6IED8</accession>
<dbReference type="EMBL" id="BC111668">
    <property type="protein sequence ID" value="AAI11669.1"/>
    <property type="molecule type" value="mRNA"/>
</dbReference>
<dbReference type="EMBL" id="BN000173">
    <property type="protein sequence ID" value="CAD98145.1"/>
    <property type="molecule type" value="mRNA"/>
</dbReference>
<dbReference type="RefSeq" id="NP_001069056.1">
    <property type="nucleotide sequence ID" value="NM_001075588.1"/>
</dbReference>
<dbReference type="RefSeq" id="XP_005203178.1">
    <property type="nucleotide sequence ID" value="XM_005203121.3"/>
</dbReference>
<dbReference type="FunCoup" id="Q6IED8">
    <property type="interactions" value="8"/>
</dbReference>
<dbReference type="STRING" id="9913.ENSBTAP00000063610"/>
<dbReference type="PaxDb" id="9913-ENSBTAP00000009939"/>
<dbReference type="GeneID" id="512913"/>
<dbReference type="KEGG" id="bta:512913"/>
<dbReference type="CTD" id="2537"/>
<dbReference type="VEuPathDB" id="HostDB:ENSBTAG00000007554"/>
<dbReference type="eggNOG" id="ENOG502SCCP">
    <property type="taxonomic scope" value="Eukaryota"/>
</dbReference>
<dbReference type="HOGENOM" id="CLU_119109_0_0_1"/>
<dbReference type="InParanoid" id="Q6IED8"/>
<dbReference type="OMA" id="YTVHKHL"/>
<dbReference type="OrthoDB" id="9948818at2759"/>
<dbReference type="TreeFam" id="TF340510"/>
<dbReference type="Reactome" id="R-BTA-9909505">
    <property type="pathway name" value="Modulation of host responses by IFN-stimulated genes"/>
</dbReference>
<dbReference type="Proteomes" id="UP000009136">
    <property type="component" value="Chromosome 2"/>
</dbReference>
<dbReference type="Bgee" id="ENSBTAG00000007554">
    <property type="expression patterns" value="Expressed in corpus epididymis and 108 other cell types or tissues"/>
</dbReference>
<dbReference type="GO" id="GO:0005743">
    <property type="term" value="C:mitochondrial inner membrane"/>
    <property type="evidence" value="ECO:0000250"/>
    <property type="project" value="UniProtKB"/>
</dbReference>
<dbReference type="GO" id="GO:0031966">
    <property type="term" value="C:mitochondrial membrane"/>
    <property type="evidence" value="ECO:0000318"/>
    <property type="project" value="GO_Central"/>
</dbReference>
<dbReference type="GO" id="GO:0005739">
    <property type="term" value="C:mitochondrion"/>
    <property type="evidence" value="ECO:0000250"/>
    <property type="project" value="HGNC-UCL"/>
</dbReference>
<dbReference type="GO" id="GO:0060090">
    <property type="term" value="F:molecular adaptor activity"/>
    <property type="evidence" value="ECO:0000318"/>
    <property type="project" value="GO_Central"/>
</dbReference>
<dbReference type="GO" id="GO:0006915">
    <property type="term" value="P:apoptotic process"/>
    <property type="evidence" value="ECO:0000250"/>
    <property type="project" value="UniProtKB"/>
</dbReference>
<dbReference type="GO" id="GO:0098586">
    <property type="term" value="P:cellular response to virus"/>
    <property type="evidence" value="ECO:0000250"/>
    <property type="project" value="UniProtKB"/>
</dbReference>
<dbReference type="GO" id="GO:0051607">
    <property type="term" value="P:defense response to virus"/>
    <property type="evidence" value="ECO:0000250"/>
    <property type="project" value="UniProtKB"/>
</dbReference>
<dbReference type="GO" id="GO:0045087">
    <property type="term" value="P:innate immune response"/>
    <property type="evidence" value="ECO:0000250"/>
    <property type="project" value="UniProtKB"/>
</dbReference>
<dbReference type="GO" id="GO:0097193">
    <property type="term" value="P:intrinsic apoptotic signaling pathway"/>
    <property type="evidence" value="ECO:0000250"/>
    <property type="project" value="UniProtKB"/>
</dbReference>
<dbReference type="GO" id="GO:0043066">
    <property type="term" value="P:negative regulation of apoptotic process"/>
    <property type="evidence" value="ECO:0000250"/>
    <property type="project" value="UniProtKB"/>
</dbReference>
<dbReference type="GO" id="GO:2001240">
    <property type="term" value="P:negative regulation of extrinsic apoptotic signaling pathway in absence of ligand"/>
    <property type="evidence" value="ECO:0000250"/>
    <property type="project" value="HGNC"/>
</dbReference>
<dbReference type="GO" id="GO:0051902">
    <property type="term" value="P:negative regulation of mitochondrial depolarization"/>
    <property type="evidence" value="ECO:0000250"/>
    <property type="project" value="HGNC-UCL"/>
</dbReference>
<dbReference type="GO" id="GO:0090201">
    <property type="term" value="P:negative regulation of release of cytochrome c from mitochondria"/>
    <property type="evidence" value="ECO:0000250"/>
    <property type="project" value="HGNC-UCL"/>
</dbReference>
<dbReference type="GO" id="GO:0072593">
    <property type="term" value="P:reactive oxygen species metabolic process"/>
    <property type="evidence" value="ECO:0000250"/>
    <property type="project" value="UniProtKB"/>
</dbReference>
<dbReference type="GO" id="GO:0042058">
    <property type="term" value="P:regulation of epidermal growth factor receptor signaling pathway"/>
    <property type="evidence" value="ECO:0000250"/>
    <property type="project" value="UniProtKB"/>
</dbReference>
<dbReference type="Gene3D" id="6.10.110.10">
    <property type="match status" value="1"/>
</dbReference>
<dbReference type="InterPro" id="IPR009311">
    <property type="entry name" value="IFI6/IFI27-like"/>
</dbReference>
<dbReference type="InterPro" id="IPR038213">
    <property type="entry name" value="IFI6/IFI27-like_sf"/>
</dbReference>
<dbReference type="InterPro" id="IPR036259">
    <property type="entry name" value="MFS_trans_sf"/>
</dbReference>
<dbReference type="PANTHER" id="PTHR16932">
    <property type="entry name" value="INTERFERON ALPHA-INDUCIBLE PROTEIN 27"/>
    <property type="match status" value="1"/>
</dbReference>
<dbReference type="PANTHER" id="PTHR16932:SF25">
    <property type="entry name" value="INTERFERON ALPHA-INDUCIBLE PROTEIN 6"/>
    <property type="match status" value="1"/>
</dbReference>
<dbReference type="Pfam" id="PF06140">
    <property type="entry name" value="Ifi-6-16"/>
    <property type="match status" value="1"/>
</dbReference>
<dbReference type="SUPFAM" id="SSF103473">
    <property type="entry name" value="MFS general substrate transporter"/>
    <property type="match status" value="1"/>
</dbReference>
<gene>
    <name type="primary">IFI6</name>
</gene>
<protein>
    <recommendedName>
        <fullName evidence="4">Interferon alpha-inducible protein 6</fullName>
    </recommendedName>
    <alternativeName>
        <fullName evidence="3">Interferon-induced protein 6-16</fullName>
        <shortName evidence="3">Ifi-6-16</shortName>
    </alternativeName>
</protein>
<sequence>MRQKAVSLFLCYLLLYTCGCCEEEDEKRYSEENSDSSFWGMVTYMAVGGGLMAAALPMLGFASTGIAANSLASSLMSWSAVANGGGVPAGGLVATLQSLGASGGSALMAKIGAFLGYTVHKQVESRQKESKEKK</sequence>
<proteinExistence type="evidence at transcript level"/>